<proteinExistence type="inferred from homology"/>
<reference key="1">
    <citation type="journal article" date="2009" name="Genome Res.">
        <title>Comparative genomic analyses of the human fungal pathogens Coccidioides and their relatives.</title>
        <authorList>
            <person name="Sharpton T.J."/>
            <person name="Stajich J.E."/>
            <person name="Rounsley S.D."/>
            <person name="Gardner M.J."/>
            <person name="Wortman J.R."/>
            <person name="Jordar V.S."/>
            <person name="Maiti R."/>
            <person name="Kodira C.D."/>
            <person name="Neafsey D.E."/>
            <person name="Zeng Q."/>
            <person name="Hung C.-Y."/>
            <person name="McMahan C."/>
            <person name="Muszewska A."/>
            <person name="Grynberg M."/>
            <person name="Mandel M.A."/>
            <person name="Kellner E.M."/>
            <person name="Barker B.M."/>
            <person name="Galgiani J.N."/>
            <person name="Orbach M.J."/>
            <person name="Kirkland T.N."/>
            <person name="Cole G.T."/>
            <person name="Henn M.R."/>
            <person name="Birren B.W."/>
            <person name="Taylor J.W."/>
        </authorList>
    </citation>
    <scope>NUCLEOTIDE SEQUENCE [LARGE SCALE GENOMIC DNA]</scope>
    <source>
        <strain>RS</strain>
    </source>
</reference>
<reference key="2">
    <citation type="journal article" date="2010" name="Genome Res.">
        <title>Population genomic sequencing of Coccidioides fungi reveals recent hybridization and transposon control.</title>
        <authorList>
            <person name="Neafsey D.E."/>
            <person name="Barker B.M."/>
            <person name="Sharpton T.J."/>
            <person name="Stajich J.E."/>
            <person name="Park D.J."/>
            <person name="Whiston E."/>
            <person name="Hung C.-Y."/>
            <person name="McMahan C."/>
            <person name="White J."/>
            <person name="Sykes S."/>
            <person name="Heiman D."/>
            <person name="Young S."/>
            <person name="Zeng Q."/>
            <person name="Abouelleil A."/>
            <person name="Aftuck L."/>
            <person name="Bessette D."/>
            <person name="Brown A."/>
            <person name="FitzGerald M."/>
            <person name="Lui A."/>
            <person name="Macdonald J.P."/>
            <person name="Priest M."/>
            <person name="Orbach M.J."/>
            <person name="Galgiani J.N."/>
            <person name="Kirkland T.N."/>
            <person name="Cole G.T."/>
            <person name="Birren B.W."/>
            <person name="Henn M.R."/>
            <person name="Taylor J.W."/>
            <person name="Rounsley S.D."/>
        </authorList>
    </citation>
    <scope>GENOME REANNOTATION</scope>
    <source>
        <strain>RS</strain>
    </source>
</reference>
<gene>
    <name evidence="1" type="primary">PAN3</name>
    <name type="ORF">CIMG_03141</name>
</gene>
<protein>
    <recommendedName>
        <fullName evidence="1">PAN2-PAN3 deadenylation complex subunit PAN3</fullName>
    </recommendedName>
    <alternativeName>
        <fullName evidence="1">PAB1P-dependent poly(A)-specific ribonuclease</fullName>
    </alternativeName>
    <alternativeName>
        <fullName evidence="1">Poly(A)-nuclease deadenylation complex subunit 3</fullName>
        <shortName evidence="1">PAN deadenylation complex subunit 3</shortName>
    </alternativeName>
</protein>
<dbReference type="EMBL" id="GG704916">
    <property type="protein sequence ID" value="EAS32117.3"/>
    <property type="molecule type" value="Genomic_DNA"/>
</dbReference>
<dbReference type="RefSeq" id="XP_001243700.2">
    <property type="nucleotide sequence ID" value="XM_001243699.2"/>
</dbReference>
<dbReference type="SMR" id="Q1E2S2"/>
<dbReference type="FunCoup" id="Q1E2S2">
    <property type="interactions" value="610"/>
</dbReference>
<dbReference type="STRING" id="246410.Q1E2S2"/>
<dbReference type="GeneID" id="4563736"/>
<dbReference type="KEGG" id="cim:CIMG_03141"/>
<dbReference type="VEuPathDB" id="FungiDB:CIMG_03141"/>
<dbReference type="InParanoid" id="Q1E2S2"/>
<dbReference type="OMA" id="YVFHSVD"/>
<dbReference type="OrthoDB" id="204958at2759"/>
<dbReference type="Proteomes" id="UP000001261">
    <property type="component" value="Unassembled WGS sequence"/>
</dbReference>
<dbReference type="GO" id="GO:0000932">
    <property type="term" value="C:P-body"/>
    <property type="evidence" value="ECO:0007669"/>
    <property type="project" value="TreeGrafter"/>
</dbReference>
<dbReference type="GO" id="GO:0031251">
    <property type="term" value="C:PAN complex"/>
    <property type="evidence" value="ECO:0007669"/>
    <property type="project" value="UniProtKB-UniRule"/>
</dbReference>
<dbReference type="GO" id="GO:0005524">
    <property type="term" value="F:ATP binding"/>
    <property type="evidence" value="ECO:0007669"/>
    <property type="project" value="UniProtKB-UniRule"/>
</dbReference>
<dbReference type="GO" id="GO:0008143">
    <property type="term" value="F:poly(A) binding"/>
    <property type="evidence" value="ECO:0007669"/>
    <property type="project" value="TreeGrafter"/>
</dbReference>
<dbReference type="GO" id="GO:0004672">
    <property type="term" value="F:protein kinase activity"/>
    <property type="evidence" value="ECO:0007669"/>
    <property type="project" value="InterPro"/>
</dbReference>
<dbReference type="GO" id="GO:0008270">
    <property type="term" value="F:zinc ion binding"/>
    <property type="evidence" value="ECO:0007669"/>
    <property type="project" value="UniProtKB-KW"/>
</dbReference>
<dbReference type="GO" id="GO:0006397">
    <property type="term" value="P:mRNA processing"/>
    <property type="evidence" value="ECO:0007669"/>
    <property type="project" value="UniProtKB-KW"/>
</dbReference>
<dbReference type="GO" id="GO:0000289">
    <property type="term" value="P:nuclear-transcribed mRNA poly(A) tail shortening"/>
    <property type="evidence" value="ECO:0007669"/>
    <property type="project" value="UniProtKB-UniRule"/>
</dbReference>
<dbReference type="FunFam" id="1.10.287.3700:FF:000001">
    <property type="entry name" value="PAN2-PAN3 deadenylation complex subunit PAN3"/>
    <property type="match status" value="1"/>
</dbReference>
<dbReference type="FunFam" id="1.10.510.10:FF:000520">
    <property type="entry name" value="PAN2-PAN3 deadenylation complex subunit PAN3"/>
    <property type="match status" value="1"/>
</dbReference>
<dbReference type="FunFam" id="1.20.5.5160:FF:000002">
    <property type="entry name" value="PAN2-PAN3 deadenylation complex subunit PAN3"/>
    <property type="match status" value="1"/>
</dbReference>
<dbReference type="Gene3D" id="1.10.287.3700">
    <property type="match status" value="1"/>
</dbReference>
<dbReference type="Gene3D" id="1.20.5.5160">
    <property type="match status" value="1"/>
</dbReference>
<dbReference type="Gene3D" id="6.10.250.3160">
    <property type="match status" value="1"/>
</dbReference>
<dbReference type="Gene3D" id="1.10.510.10">
    <property type="entry name" value="Transferase(Phosphotransferase) domain 1"/>
    <property type="match status" value="1"/>
</dbReference>
<dbReference type="HAMAP" id="MF_03181">
    <property type="entry name" value="PAN3"/>
    <property type="match status" value="1"/>
</dbReference>
<dbReference type="InterPro" id="IPR011009">
    <property type="entry name" value="Kinase-like_dom_sf"/>
</dbReference>
<dbReference type="InterPro" id="IPR030844">
    <property type="entry name" value="PAN3"/>
</dbReference>
<dbReference type="InterPro" id="IPR041332">
    <property type="entry name" value="Pan3_PK"/>
</dbReference>
<dbReference type="InterPro" id="IPR000719">
    <property type="entry name" value="Prot_kinase_dom"/>
</dbReference>
<dbReference type="InterPro" id="IPR000571">
    <property type="entry name" value="Znf_CCCH"/>
</dbReference>
<dbReference type="PANTHER" id="PTHR12272">
    <property type="entry name" value="DEADENYLATION COMPLEX SUBUNIT PAN3"/>
    <property type="match status" value="1"/>
</dbReference>
<dbReference type="PANTHER" id="PTHR12272:SF11">
    <property type="entry name" value="PAN2-PAN3 DEADENYLATION COMPLEX SUBUNIT PAN3"/>
    <property type="match status" value="1"/>
</dbReference>
<dbReference type="Pfam" id="PF18101">
    <property type="entry name" value="Pan3_PK"/>
    <property type="match status" value="1"/>
</dbReference>
<dbReference type="SUPFAM" id="SSF56112">
    <property type="entry name" value="Protein kinase-like (PK-like)"/>
    <property type="match status" value="1"/>
</dbReference>
<dbReference type="PROSITE" id="PS50011">
    <property type="entry name" value="PROTEIN_KINASE_DOM"/>
    <property type="match status" value="1"/>
</dbReference>
<dbReference type="PROSITE" id="PS50103">
    <property type="entry name" value="ZF_C3H1"/>
    <property type="match status" value="1"/>
</dbReference>
<comment type="function">
    <text evidence="1">Regulatory subunit of the poly(A)-nuclease (PAN) deadenylation complex, one of two cytoplasmic mRNA deadenylases involved in mRNA turnover. PAN specifically shortens poly(A) tails of RNA and the activity is stimulated by poly(A)-binding protein PAB1. PAN deadenylation is followed by rapid degradation of the shortened mRNA tails by the CCR4-NOT complex. Deadenylated mRNAs are then degraded by two alternative mechanisms, namely exosome-mediated 3'-5' exonucleolytic degradation, or deadenylation-dependent mRNA decaping and subsequent 5'-3' exonucleolytic degradation by XRN1. May also be involved in post-transcriptional maturation of mRNA poly(A) tails. PAN3 acts as a positive regulator for PAN activity, recruiting the catalytic subunit PAN2 to mRNA via its interaction with RNA and with PAB1.</text>
</comment>
<comment type="subunit">
    <text evidence="1">Homodimer. Forms a heterotrimer with a catalytic subunit PAN2 to form the poly(A)-nuclease (PAN) deadenylation complex. Interacts (via PAM-2 motif) with poly(A)-binding protein PAB1 (via PABC domain), conferring substrate specificity of the enzyme complex.</text>
</comment>
<comment type="subcellular location">
    <subcellularLocation>
        <location evidence="1">Cytoplasm</location>
    </subcellularLocation>
</comment>
<comment type="domain">
    <text evidence="1">The N-terminal zinc finger binds to poly(A) RNA.</text>
</comment>
<comment type="domain">
    <text evidence="1">Contains a pseudokinase domain. The protein kinase domain is predicted to be catalytically inactive because some of the residues important for catalytic activity are substituted and it lacks the equivalent of the binding site for a peptide substrate. However, it has retained an ATP-binding site and ATP-binding is required for mRNA degradation, stimulating the activity of the PAN2 nuclease in vitro. The nucleotide-binding site is juxtaposed to the RNase active site of PAN2 in the complex and may actually bind nucleosides of a poly(A) RNA rather than ATP, feeding the poly(A)-tail to the active site of the deadenylase and thus increasing the efficiency with which this distributive enzyme degrades oligo(A) RNAs.</text>
</comment>
<comment type="domain">
    <text evidence="1">The pseudokinase domain, the coiled-coil (CC), and C-terminal knob domain (CK) form a structural unit (PKC) that forms an extensive high-affinity interaction surface for PAN2.</text>
</comment>
<comment type="similarity">
    <text evidence="1">Belongs to the protein kinase superfamily. PAN3 family.</text>
</comment>
<accession>Q1E2S2</accession>
<evidence type="ECO:0000255" key="1">
    <source>
        <dbReference type="HAMAP-Rule" id="MF_03181"/>
    </source>
</evidence>
<evidence type="ECO:0000256" key="2">
    <source>
        <dbReference type="SAM" id="MobiDB-lite"/>
    </source>
</evidence>
<keyword id="KW-0067">ATP-binding</keyword>
<keyword id="KW-0175">Coiled coil</keyword>
<keyword id="KW-0963">Cytoplasm</keyword>
<keyword id="KW-0479">Metal-binding</keyword>
<keyword id="KW-0507">mRNA processing</keyword>
<keyword id="KW-0547">Nucleotide-binding</keyword>
<keyword id="KW-1185">Reference proteome</keyword>
<keyword id="KW-0862">Zinc</keyword>
<keyword id="KW-0863">Zinc-finger</keyword>
<feature type="chain" id="PRO_0000295365" description="PAN2-PAN3 deadenylation complex subunit PAN3">
    <location>
        <begin position="1"/>
        <end position="657"/>
    </location>
</feature>
<feature type="zinc finger region" description="C3H1-type" evidence="1">
    <location>
        <begin position="27"/>
        <end position="55"/>
    </location>
</feature>
<feature type="region of interest" description="Disordered" evidence="2">
    <location>
        <begin position="1"/>
        <end position="29"/>
    </location>
</feature>
<feature type="region of interest" description="Disordered" evidence="2">
    <location>
        <begin position="52"/>
        <end position="98"/>
    </location>
</feature>
<feature type="region of interest" description="Disordered" evidence="2">
    <location>
        <begin position="115"/>
        <end position="135"/>
    </location>
</feature>
<feature type="region of interest" description="Pseudokinase domain" evidence="1">
    <location>
        <begin position="259"/>
        <end position="521"/>
    </location>
</feature>
<feature type="region of interest" description="Knob domain" evidence="1">
    <location>
        <begin position="561"/>
        <end position="657"/>
    </location>
</feature>
<feature type="coiled-coil region" evidence="1">
    <location>
        <begin position="522"/>
        <end position="560"/>
    </location>
</feature>
<feature type="compositionally biased region" description="Basic and acidic residues" evidence="2">
    <location>
        <begin position="52"/>
        <end position="67"/>
    </location>
</feature>
<feature type="compositionally biased region" description="Polar residues" evidence="2">
    <location>
        <begin position="75"/>
        <end position="98"/>
    </location>
</feature>
<feature type="compositionally biased region" description="Polar residues" evidence="2">
    <location>
        <begin position="115"/>
        <end position="132"/>
    </location>
</feature>
<feature type="binding site" evidence="1">
    <location>
        <position position="311"/>
    </location>
    <ligand>
        <name>ATP</name>
        <dbReference type="ChEBI" id="CHEBI:30616"/>
    </ligand>
</feature>
<feature type="binding site" evidence="1">
    <location>
        <begin position="360"/>
        <end position="367"/>
    </location>
    <ligand>
        <name>ATP</name>
        <dbReference type="ChEBI" id="CHEBI:30616"/>
    </ligand>
</feature>
<feature type="binding site" evidence="1">
    <location>
        <begin position="421"/>
        <end position="422"/>
    </location>
    <ligand>
        <name>ATP</name>
        <dbReference type="ChEBI" id="CHEBI:30616"/>
    </ligand>
</feature>
<sequence length="657" mass="73083">MASAGKPNIDDGRRGTSSPKLKGRDHAKDTLCRNVTIYGRCRYEDKGCVFNHDPSRVNDAQHPERSSSKKRFNVDSPSFTPSATPLNGSSGLKKSATISPKAANAAPFLPKGVLSRSNAATPQSQPETSTPEWSIGEIQDFVPQGFDTSHVESIHGHGNGVLSTPAYDPFVSSSTPLGASGAVTHQVQPNPYSHDPSAIGGAAFFGAHNAFQQPVQYHLYAPIGPHNQNILGYQRNIHDLFLPNSFREELQKKAAATLQTLPNSQLPTQIDYFHSLVPLDLSHQKNAAIFGYPSWVYKAQSSKDGNFYALRRLEGFRLTNEKAIRSVQNWKRVSCGSVVTVHDAFTNRSFQDSSLIFVTDYHPLSKTLAEQHLADGQGRYQGRHTSGHIPEQILWSYVTQIANALKAIHSAGLAARVIEPSKILLTGKNRIRLNACGILDVVQFDSQRPLADLQHQDLVNFGQLILTLGANSPSLMHNPTKATEHFNRSYSAQLNNSVYWLLSGMQKDQERTIDIFISGISSQLMSTFDSSLHLDDQLISDLSRELENARLVRLLTKLNFINERPEYEHDRQWSENGERYFLKLFRDYVFHQVDAQNAPVVDLGHVLTCLNKLDAGTDEKVTLISRDEQSCFIVSYKELKKAVEASFQALLKPARRI</sequence>
<organism>
    <name type="scientific">Coccidioides immitis (strain RS)</name>
    <name type="common">Valley fever fungus</name>
    <dbReference type="NCBI Taxonomy" id="246410"/>
    <lineage>
        <taxon>Eukaryota</taxon>
        <taxon>Fungi</taxon>
        <taxon>Dikarya</taxon>
        <taxon>Ascomycota</taxon>
        <taxon>Pezizomycotina</taxon>
        <taxon>Eurotiomycetes</taxon>
        <taxon>Eurotiomycetidae</taxon>
        <taxon>Onygenales</taxon>
        <taxon>Onygenaceae</taxon>
        <taxon>Coccidioides</taxon>
    </lineage>
</organism>
<name>PAN3_COCIM</name>